<comment type="catalytic activity">
    <reaction evidence="1">
        <text>Hydrolysis of terminal, non-reducing beta-D-glucosyl residues with release of beta-D-glucose.</text>
        <dbReference type="EC" id="3.2.1.21"/>
    </reaction>
</comment>
<comment type="similarity">
    <text evidence="8">Belongs to the glycosyl hydrolase 1 family.</text>
</comment>
<comment type="sequence caution" evidence="8">
    <conflict type="erroneous gene model prediction">
        <sequence resource="EMBL-CDS" id="CAB43970"/>
    </conflict>
</comment>
<comment type="sequence caution" evidence="8">
    <conflict type="erroneous gene model prediction">
        <sequence resource="EMBL-CDS" id="CAB81431"/>
    </conflict>
</comment>
<proteinExistence type="evidence at transcript level"/>
<accession>Q9STP4</accession>
<accession>Q0WND2</accession>
<dbReference type="EC" id="3.2.1.21" evidence="1"/>
<dbReference type="EMBL" id="AL078579">
    <property type="protein sequence ID" value="CAB43970.1"/>
    <property type="status" value="ALT_SEQ"/>
    <property type="molecule type" value="Genomic_DNA"/>
</dbReference>
<dbReference type="EMBL" id="AL161571">
    <property type="protein sequence ID" value="CAB81431.1"/>
    <property type="status" value="ALT_SEQ"/>
    <property type="molecule type" value="Genomic_DNA"/>
</dbReference>
<dbReference type="EMBL" id="CP002687">
    <property type="protein sequence ID" value="AEE85397.1"/>
    <property type="molecule type" value="Genomic_DNA"/>
</dbReference>
<dbReference type="EMBL" id="AK229513">
    <property type="protein sequence ID" value="BAF01368.1"/>
    <property type="molecule type" value="mRNA"/>
</dbReference>
<dbReference type="PIR" id="T09021">
    <property type="entry name" value="T09021"/>
</dbReference>
<dbReference type="RefSeq" id="NP_194511.3">
    <property type="nucleotide sequence ID" value="NM_118920.5"/>
</dbReference>
<dbReference type="SMR" id="Q9STP4"/>
<dbReference type="FunCoup" id="Q9STP4">
    <property type="interactions" value="202"/>
</dbReference>
<dbReference type="STRING" id="3702.Q9STP4"/>
<dbReference type="CAZy" id="GH1">
    <property type="family name" value="Glycoside Hydrolase Family 1"/>
</dbReference>
<dbReference type="GlyCosmos" id="Q9STP4">
    <property type="glycosylation" value="7 sites, No reported glycans"/>
</dbReference>
<dbReference type="GlyGen" id="Q9STP4">
    <property type="glycosylation" value="7 sites"/>
</dbReference>
<dbReference type="PaxDb" id="3702-AT4G27820.1"/>
<dbReference type="ProteomicsDB" id="240827"/>
<dbReference type="EnsemblPlants" id="AT4G27820.1">
    <property type="protein sequence ID" value="AT4G27820.1"/>
    <property type="gene ID" value="AT4G27820"/>
</dbReference>
<dbReference type="GeneID" id="828895"/>
<dbReference type="Gramene" id="AT4G27820.1">
    <property type="protein sequence ID" value="AT4G27820.1"/>
    <property type="gene ID" value="AT4G27820"/>
</dbReference>
<dbReference type="KEGG" id="ath:AT4G27820"/>
<dbReference type="Araport" id="AT4G27820"/>
<dbReference type="TAIR" id="AT4G27820">
    <property type="gene designation" value="BGLU9"/>
</dbReference>
<dbReference type="eggNOG" id="KOG0626">
    <property type="taxonomic scope" value="Eukaryota"/>
</dbReference>
<dbReference type="HOGENOM" id="CLU_001859_1_0_1"/>
<dbReference type="InParanoid" id="Q9STP4"/>
<dbReference type="OMA" id="KPMKRGS"/>
<dbReference type="PhylomeDB" id="Q9STP4"/>
<dbReference type="BioCyc" id="ARA:AT4G27820-MONOMER"/>
<dbReference type="PRO" id="PR:Q9STP4"/>
<dbReference type="Proteomes" id="UP000006548">
    <property type="component" value="Chromosome 4"/>
</dbReference>
<dbReference type="ExpressionAtlas" id="Q9STP4">
    <property type="expression patterns" value="baseline and differential"/>
</dbReference>
<dbReference type="GO" id="GO:0005777">
    <property type="term" value="C:peroxisome"/>
    <property type="evidence" value="ECO:0000314"/>
    <property type="project" value="TAIR"/>
</dbReference>
<dbReference type="GO" id="GO:0008422">
    <property type="term" value="F:beta-glucosidase activity"/>
    <property type="evidence" value="ECO:0007669"/>
    <property type="project" value="UniProtKB-EC"/>
</dbReference>
<dbReference type="GO" id="GO:0005975">
    <property type="term" value="P:carbohydrate metabolic process"/>
    <property type="evidence" value="ECO:0007669"/>
    <property type="project" value="InterPro"/>
</dbReference>
<dbReference type="FunFam" id="3.20.20.80:FF:000069">
    <property type="entry name" value="Beta-glucosidase 1"/>
    <property type="match status" value="1"/>
</dbReference>
<dbReference type="Gene3D" id="3.20.20.80">
    <property type="entry name" value="Glycosidases"/>
    <property type="match status" value="1"/>
</dbReference>
<dbReference type="InterPro" id="IPR001360">
    <property type="entry name" value="Glyco_hydro_1"/>
</dbReference>
<dbReference type="InterPro" id="IPR033132">
    <property type="entry name" value="Glyco_hydro_1_N_CS"/>
</dbReference>
<dbReference type="InterPro" id="IPR017853">
    <property type="entry name" value="Glycoside_hydrolase_SF"/>
</dbReference>
<dbReference type="PANTHER" id="PTHR10353:SF211">
    <property type="entry name" value="BETA-GLUCOSIDASE 10-RELATED"/>
    <property type="match status" value="1"/>
</dbReference>
<dbReference type="PANTHER" id="PTHR10353">
    <property type="entry name" value="GLYCOSYL HYDROLASE"/>
    <property type="match status" value="1"/>
</dbReference>
<dbReference type="Pfam" id="PF00232">
    <property type="entry name" value="Glyco_hydro_1"/>
    <property type="match status" value="1"/>
</dbReference>
<dbReference type="PRINTS" id="PR00131">
    <property type="entry name" value="GLHYDRLASE1"/>
</dbReference>
<dbReference type="SUPFAM" id="SSF51445">
    <property type="entry name" value="(Trans)glycosidases"/>
    <property type="match status" value="1"/>
</dbReference>
<dbReference type="PROSITE" id="PS00653">
    <property type="entry name" value="GLYCOSYL_HYDROL_F1_2"/>
    <property type="match status" value="1"/>
</dbReference>
<gene>
    <name evidence="7" type="primary">BGLU9</name>
    <name evidence="9" type="ordered locus">At4g27820</name>
    <name evidence="10" type="ORF">T27E11.60</name>
</gene>
<reference key="1">
    <citation type="journal article" date="1999" name="Nature">
        <title>Sequence and analysis of chromosome 4 of the plant Arabidopsis thaliana.</title>
        <authorList>
            <person name="Mayer K.F.X."/>
            <person name="Schueller C."/>
            <person name="Wambutt R."/>
            <person name="Murphy G."/>
            <person name="Volckaert G."/>
            <person name="Pohl T."/>
            <person name="Duesterhoeft A."/>
            <person name="Stiekema W."/>
            <person name="Entian K.-D."/>
            <person name="Terryn N."/>
            <person name="Harris B."/>
            <person name="Ansorge W."/>
            <person name="Brandt P."/>
            <person name="Grivell L.A."/>
            <person name="Rieger M."/>
            <person name="Weichselgartner M."/>
            <person name="de Simone V."/>
            <person name="Obermaier B."/>
            <person name="Mache R."/>
            <person name="Mueller M."/>
            <person name="Kreis M."/>
            <person name="Delseny M."/>
            <person name="Puigdomenech P."/>
            <person name="Watson M."/>
            <person name="Schmidtheini T."/>
            <person name="Reichert B."/>
            <person name="Portetelle D."/>
            <person name="Perez-Alonso M."/>
            <person name="Boutry M."/>
            <person name="Bancroft I."/>
            <person name="Vos P."/>
            <person name="Hoheisel J."/>
            <person name="Zimmermann W."/>
            <person name="Wedler H."/>
            <person name="Ridley P."/>
            <person name="Langham S.-A."/>
            <person name="McCullagh B."/>
            <person name="Bilham L."/>
            <person name="Robben J."/>
            <person name="van der Schueren J."/>
            <person name="Grymonprez B."/>
            <person name="Chuang Y.-J."/>
            <person name="Vandenbussche F."/>
            <person name="Braeken M."/>
            <person name="Weltjens I."/>
            <person name="Voet M."/>
            <person name="Bastiaens I."/>
            <person name="Aert R."/>
            <person name="Defoor E."/>
            <person name="Weitzenegger T."/>
            <person name="Bothe G."/>
            <person name="Ramsperger U."/>
            <person name="Hilbert H."/>
            <person name="Braun M."/>
            <person name="Holzer E."/>
            <person name="Brandt A."/>
            <person name="Peters S."/>
            <person name="van Staveren M."/>
            <person name="Dirkse W."/>
            <person name="Mooijman P."/>
            <person name="Klein Lankhorst R."/>
            <person name="Rose M."/>
            <person name="Hauf J."/>
            <person name="Koetter P."/>
            <person name="Berneiser S."/>
            <person name="Hempel S."/>
            <person name="Feldpausch M."/>
            <person name="Lamberth S."/>
            <person name="Van den Daele H."/>
            <person name="De Keyser A."/>
            <person name="Buysshaert C."/>
            <person name="Gielen J."/>
            <person name="Villarroel R."/>
            <person name="De Clercq R."/>
            <person name="van Montagu M."/>
            <person name="Rogers J."/>
            <person name="Cronin A."/>
            <person name="Quail M.A."/>
            <person name="Bray-Allen S."/>
            <person name="Clark L."/>
            <person name="Doggett J."/>
            <person name="Hall S."/>
            <person name="Kay M."/>
            <person name="Lennard N."/>
            <person name="McLay K."/>
            <person name="Mayes R."/>
            <person name="Pettett A."/>
            <person name="Rajandream M.A."/>
            <person name="Lyne M."/>
            <person name="Benes V."/>
            <person name="Rechmann S."/>
            <person name="Borkova D."/>
            <person name="Bloecker H."/>
            <person name="Scharfe M."/>
            <person name="Grimm M."/>
            <person name="Loehnert T.-H."/>
            <person name="Dose S."/>
            <person name="de Haan M."/>
            <person name="Maarse A.C."/>
            <person name="Schaefer M."/>
            <person name="Mueller-Auer S."/>
            <person name="Gabel C."/>
            <person name="Fuchs M."/>
            <person name="Fartmann B."/>
            <person name="Granderath K."/>
            <person name="Dauner D."/>
            <person name="Herzl A."/>
            <person name="Neumann S."/>
            <person name="Argiriou A."/>
            <person name="Vitale D."/>
            <person name="Liguori R."/>
            <person name="Piravandi E."/>
            <person name="Massenet O."/>
            <person name="Quigley F."/>
            <person name="Clabauld G."/>
            <person name="Muendlein A."/>
            <person name="Felber R."/>
            <person name="Schnabl S."/>
            <person name="Hiller R."/>
            <person name="Schmidt W."/>
            <person name="Lecharny A."/>
            <person name="Aubourg S."/>
            <person name="Chefdor F."/>
            <person name="Cooke R."/>
            <person name="Berger C."/>
            <person name="Monfort A."/>
            <person name="Casacuberta E."/>
            <person name="Gibbons T."/>
            <person name="Weber N."/>
            <person name="Vandenbol M."/>
            <person name="Bargues M."/>
            <person name="Terol J."/>
            <person name="Torres A."/>
            <person name="Perez-Perez A."/>
            <person name="Purnelle B."/>
            <person name="Bent E."/>
            <person name="Johnson S."/>
            <person name="Tacon D."/>
            <person name="Jesse T."/>
            <person name="Heijnen L."/>
            <person name="Schwarz S."/>
            <person name="Scholler P."/>
            <person name="Heber S."/>
            <person name="Francs P."/>
            <person name="Bielke C."/>
            <person name="Frishman D."/>
            <person name="Haase D."/>
            <person name="Lemcke K."/>
            <person name="Mewes H.-W."/>
            <person name="Stocker S."/>
            <person name="Zaccaria P."/>
            <person name="Bevan M."/>
            <person name="Wilson R.K."/>
            <person name="de la Bastide M."/>
            <person name="Habermann K."/>
            <person name="Parnell L."/>
            <person name="Dedhia N."/>
            <person name="Gnoj L."/>
            <person name="Schutz K."/>
            <person name="Huang E."/>
            <person name="Spiegel L."/>
            <person name="Sekhon M."/>
            <person name="Murray J."/>
            <person name="Sheet P."/>
            <person name="Cordes M."/>
            <person name="Abu-Threideh J."/>
            <person name="Stoneking T."/>
            <person name="Kalicki J."/>
            <person name="Graves T."/>
            <person name="Harmon G."/>
            <person name="Edwards J."/>
            <person name="Latreille P."/>
            <person name="Courtney L."/>
            <person name="Cloud J."/>
            <person name="Abbott A."/>
            <person name="Scott K."/>
            <person name="Johnson D."/>
            <person name="Minx P."/>
            <person name="Bentley D."/>
            <person name="Fulton B."/>
            <person name="Miller N."/>
            <person name="Greco T."/>
            <person name="Kemp K."/>
            <person name="Kramer J."/>
            <person name="Fulton L."/>
            <person name="Mardis E."/>
            <person name="Dante M."/>
            <person name="Pepin K."/>
            <person name="Hillier L.W."/>
            <person name="Nelson J."/>
            <person name="Spieth J."/>
            <person name="Ryan E."/>
            <person name="Andrews S."/>
            <person name="Geisel C."/>
            <person name="Layman D."/>
            <person name="Du H."/>
            <person name="Ali J."/>
            <person name="Berghoff A."/>
            <person name="Jones K."/>
            <person name="Drone K."/>
            <person name="Cotton M."/>
            <person name="Joshu C."/>
            <person name="Antonoiu B."/>
            <person name="Zidanic M."/>
            <person name="Strong C."/>
            <person name="Sun H."/>
            <person name="Lamar B."/>
            <person name="Yordan C."/>
            <person name="Ma P."/>
            <person name="Zhong J."/>
            <person name="Preston R."/>
            <person name="Vil D."/>
            <person name="Shekher M."/>
            <person name="Matero A."/>
            <person name="Shah R."/>
            <person name="Swaby I.K."/>
            <person name="O'Shaughnessy A."/>
            <person name="Rodriguez M."/>
            <person name="Hoffman J."/>
            <person name="Till S."/>
            <person name="Granat S."/>
            <person name="Shohdy N."/>
            <person name="Hasegawa A."/>
            <person name="Hameed A."/>
            <person name="Lodhi M."/>
            <person name="Johnson A."/>
            <person name="Chen E."/>
            <person name="Marra M.A."/>
            <person name="Martienssen R."/>
            <person name="McCombie W.R."/>
        </authorList>
    </citation>
    <scope>NUCLEOTIDE SEQUENCE [LARGE SCALE GENOMIC DNA]</scope>
    <source>
        <strain>cv. Columbia</strain>
    </source>
</reference>
<reference key="2">
    <citation type="journal article" date="2017" name="Plant J.">
        <title>Araport11: a complete reannotation of the Arabidopsis thaliana reference genome.</title>
        <authorList>
            <person name="Cheng C.Y."/>
            <person name="Krishnakumar V."/>
            <person name="Chan A.P."/>
            <person name="Thibaud-Nissen F."/>
            <person name="Schobel S."/>
            <person name="Town C.D."/>
        </authorList>
    </citation>
    <scope>GENOME REANNOTATION</scope>
    <source>
        <strain>cv. Columbia</strain>
    </source>
</reference>
<reference key="3">
    <citation type="submission" date="2006-07" db="EMBL/GenBank/DDBJ databases">
        <title>Large-scale analysis of RIKEN Arabidopsis full-length (RAFL) cDNAs.</title>
        <authorList>
            <person name="Totoki Y."/>
            <person name="Seki M."/>
            <person name="Ishida J."/>
            <person name="Nakajima M."/>
            <person name="Enju A."/>
            <person name="Kamiya A."/>
            <person name="Narusaka M."/>
            <person name="Shin-i T."/>
            <person name="Nakagawa M."/>
            <person name="Sakamoto N."/>
            <person name="Oishi K."/>
            <person name="Kohara Y."/>
            <person name="Kobayashi M."/>
            <person name="Toyoda A."/>
            <person name="Sakaki Y."/>
            <person name="Sakurai T."/>
            <person name="Iida K."/>
            <person name="Akiyama K."/>
            <person name="Satou M."/>
            <person name="Toyoda T."/>
            <person name="Konagaya A."/>
            <person name="Carninci P."/>
            <person name="Kawai J."/>
            <person name="Hayashizaki Y."/>
            <person name="Shinozaki K."/>
        </authorList>
    </citation>
    <scope>NUCLEOTIDE SEQUENCE [LARGE SCALE MRNA] OF 325-506</scope>
    <source>
        <strain>cv. Columbia</strain>
    </source>
</reference>
<reference key="4">
    <citation type="journal article" date="2004" name="Plant Mol. Biol.">
        <title>Functional genomic analysis of Arabidopsis thaliana glycoside hydrolase family 1.</title>
        <authorList>
            <person name="Xu Z."/>
            <person name="Escamilla-Trevino L.L."/>
            <person name="Zeng L."/>
            <person name="Lalgondar M."/>
            <person name="Bevan D.R."/>
            <person name="Winkel B.S.J."/>
            <person name="Mohamed A."/>
            <person name="Cheng C.-L."/>
            <person name="Shih M.-C."/>
            <person name="Poulton J.E."/>
            <person name="Esen A."/>
        </authorList>
    </citation>
    <scope>GENE FAMILY</scope>
    <scope>NOMENCLATURE</scope>
</reference>
<sequence>MKHFSLLFIFLVILLATSYSDAFTRNSFPKDFLFGAATSAYQWEGAVAEDGRTPSVWDTFSNSYDTGNGDVTSDGYHKYKEDVKLMATMGLESFRFSISWSRLIPNGRGLINPKGLLFYNNLIKDLKSHGIEPHVTLYHYDLPQSLEDEYGGWINRKIIEDFTAYADVCFREFGEDVKLWTTINEATIFAIGSYDQGTAPPGHCSPNKFVNCSTGNSSTEPYIAGHNILLAHASASKLYKLKYKSKQKGSIGLSIFAFGLSPYTNSKDDEIATQRAKTFLYGWMLKPLVFGDYPDEMKKTVGSRLPVFSEEESEQVKGSSDFIGIIHYTTFYVTNHQPSASLFPSMGEGFFKDMGVYIIPTGNSSFLVWEATPWGLEGILEYIKQSYNNPPVYILENGMPMVRDSTLQDTQRIEYIQAYIDAVLNAMKNGSDTRGYFVWSMVDVYEILSGYTTSFGMYHVNFSDPGRKRTPKLSASWYTGFLNGTIDVASQDTIQLWSNFSVSSSL</sequence>
<keyword id="KW-1015">Disulfide bond</keyword>
<keyword id="KW-0325">Glycoprotein</keyword>
<keyword id="KW-0326">Glycosidase</keyword>
<keyword id="KW-0378">Hydrolase</keyword>
<keyword id="KW-1185">Reference proteome</keyword>
<keyword id="KW-0732">Signal</keyword>
<protein>
    <recommendedName>
        <fullName evidence="7">Beta-glucosidase 9</fullName>
        <shortName evidence="7">AtBGLU9</shortName>
        <ecNumber evidence="1">3.2.1.21</ecNumber>
    </recommendedName>
</protein>
<feature type="signal peptide" evidence="5">
    <location>
        <begin position="1"/>
        <end position="22"/>
    </location>
</feature>
<feature type="chain" id="PRO_0000389571" description="Beta-glucosidase 9">
    <location>
        <begin position="23"/>
        <end position="506"/>
    </location>
</feature>
<feature type="active site" description="Proton donor" evidence="3">
    <location>
        <position position="185"/>
    </location>
</feature>
<feature type="active site" description="Nucleophile" evidence="3">
    <location>
        <position position="396"/>
    </location>
</feature>
<feature type="binding site" evidence="3">
    <location>
        <position position="42"/>
    </location>
    <ligand>
        <name>a beta-D-glucoside</name>
        <dbReference type="ChEBI" id="CHEBI:22798"/>
    </ligand>
</feature>
<feature type="binding site" evidence="3">
    <location>
        <position position="139"/>
    </location>
    <ligand>
        <name>a beta-D-glucoside</name>
        <dbReference type="ChEBI" id="CHEBI:22798"/>
    </ligand>
</feature>
<feature type="binding site" evidence="3">
    <location>
        <begin position="184"/>
        <end position="185"/>
    </location>
    <ligand>
        <name>a beta-D-glucoside</name>
        <dbReference type="ChEBI" id="CHEBI:22798"/>
    </ligand>
</feature>
<feature type="binding site" evidence="3">
    <location>
        <position position="328"/>
    </location>
    <ligand>
        <name>a beta-D-glucoside</name>
        <dbReference type="ChEBI" id="CHEBI:22798"/>
    </ligand>
</feature>
<feature type="binding site" evidence="4">
    <location>
        <position position="396"/>
    </location>
    <ligand>
        <name>a beta-D-glucoside</name>
        <dbReference type="ChEBI" id="CHEBI:22798"/>
    </ligand>
</feature>
<feature type="binding site" evidence="3">
    <location>
        <position position="439"/>
    </location>
    <ligand>
        <name>a beta-D-glucoside</name>
        <dbReference type="ChEBI" id="CHEBI:22798"/>
    </ligand>
</feature>
<feature type="binding site" evidence="2">
    <location>
        <position position="455"/>
    </location>
    <ligand>
        <name>a beta-D-glucoside</name>
        <dbReference type="ChEBI" id="CHEBI:22798"/>
    </ligand>
</feature>
<feature type="glycosylation site" description="N-linked (GlcNAc...) asparagine" evidence="6">
    <location>
        <position position="211"/>
    </location>
</feature>
<feature type="glycosylation site" description="N-linked (GlcNAc...) asparagine" evidence="6">
    <location>
        <position position="216"/>
    </location>
</feature>
<feature type="glycosylation site" description="N-linked (GlcNAc...) asparagine" evidence="6">
    <location>
        <position position="363"/>
    </location>
</feature>
<feature type="glycosylation site" description="N-linked (GlcNAc...) asparagine" evidence="6">
    <location>
        <position position="429"/>
    </location>
</feature>
<feature type="glycosylation site" description="N-linked (GlcNAc...) asparagine" evidence="6">
    <location>
        <position position="461"/>
    </location>
</feature>
<feature type="glycosylation site" description="N-linked (GlcNAc...) asparagine" evidence="6">
    <location>
        <position position="483"/>
    </location>
</feature>
<feature type="glycosylation site" description="N-linked (GlcNAc...) asparagine" evidence="6">
    <location>
        <position position="499"/>
    </location>
</feature>
<feature type="disulfide bond" evidence="3">
    <location>
        <begin position="204"/>
        <end position="212"/>
    </location>
</feature>
<name>BGL09_ARATH</name>
<evidence type="ECO:0000250" key="1">
    <source>
        <dbReference type="UniProtKB" id="O64879"/>
    </source>
</evidence>
<evidence type="ECO:0000250" key="2">
    <source>
        <dbReference type="UniProtKB" id="Q1XH05"/>
    </source>
</evidence>
<evidence type="ECO:0000250" key="3">
    <source>
        <dbReference type="UniProtKB" id="Q7XSK0"/>
    </source>
</evidence>
<evidence type="ECO:0000250" key="4">
    <source>
        <dbReference type="UniProtKB" id="Q9SPP9"/>
    </source>
</evidence>
<evidence type="ECO:0000255" key="5"/>
<evidence type="ECO:0000255" key="6">
    <source>
        <dbReference type="PROSITE-ProRule" id="PRU00498"/>
    </source>
</evidence>
<evidence type="ECO:0000303" key="7">
    <source>
    </source>
</evidence>
<evidence type="ECO:0000305" key="8"/>
<evidence type="ECO:0000312" key="9">
    <source>
        <dbReference type="Araport" id="AT4G27820"/>
    </source>
</evidence>
<evidence type="ECO:0000312" key="10">
    <source>
        <dbReference type="EMBL" id="CAB43970.1"/>
    </source>
</evidence>
<organism>
    <name type="scientific">Arabidopsis thaliana</name>
    <name type="common">Mouse-ear cress</name>
    <dbReference type="NCBI Taxonomy" id="3702"/>
    <lineage>
        <taxon>Eukaryota</taxon>
        <taxon>Viridiplantae</taxon>
        <taxon>Streptophyta</taxon>
        <taxon>Embryophyta</taxon>
        <taxon>Tracheophyta</taxon>
        <taxon>Spermatophyta</taxon>
        <taxon>Magnoliopsida</taxon>
        <taxon>eudicotyledons</taxon>
        <taxon>Gunneridae</taxon>
        <taxon>Pentapetalae</taxon>
        <taxon>rosids</taxon>
        <taxon>malvids</taxon>
        <taxon>Brassicales</taxon>
        <taxon>Brassicaceae</taxon>
        <taxon>Camelineae</taxon>
        <taxon>Arabidopsis</taxon>
    </lineage>
</organism>